<comment type="catalytic activity">
    <reaction evidence="1">
        <text>D-ribulose + ATP = D-ribulose 5-phosphate + ADP + H(+)</text>
        <dbReference type="Rhea" id="RHEA:17601"/>
        <dbReference type="ChEBI" id="CHEBI:15378"/>
        <dbReference type="ChEBI" id="CHEBI:17173"/>
        <dbReference type="ChEBI" id="CHEBI:30616"/>
        <dbReference type="ChEBI" id="CHEBI:58121"/>
        <dbReference type="ChEBI" id="CHEBI:456216"/>
        <dbReference type="EC" id="2.7.1.16"/>
    </reaction>
</comment>
<comment type="catalytic activity">
    <reaction evidence="1">
        <text>L-ribulose + ATP = L-ribulose 5-phosphate + ADP + H(+)</text>
        <dbReference type="Rhea" id="RHEA:22072"/>
        <dbReference type="ChEBI" id="CHEBI:15378"/>
        <dbReference type="ChEBI" id="CHEBI:16880"/>
        <dbReference type="ChEBI" id="CHEBI:30616"/>
        <dbReference type="ChEBI" id="CHEBI:58226"/>
        <dbReference type="ChEBI" id="CHEBI:456216"/>
        <dbReference type="EC" id="2.7.1.16"/>
    </reaction>
</comment>
<comment type="pathway">
    <text evidence="1">Carbohydrate degradation; L-arabinose degradation via L-ribulose; D-xylulose 5-phosphate from L-arabinose (bacterial route): step 2/3.</text>
</comment>
<comment type="similarity">
    <text evidence="1">Belongs to the ribulokinase family.</text>
</comment>
<gene>
    <name evidence="1" type="primary">araB</name>
    <name type="ordered locus">SeD_A0107</name>
</gene>
<sequence length="569" mass="61788">MAIAIGLDFGSDSVRALAVDCATGDEIATSVEWYPRWQEGRYCDGPNNQFRHHPRDYMESMEAALKAVLAQLSAAQRANVVGIGVDSTGSTPAPIDADGNVLALRPEFAENPNAMFVLWKDHTAVEEADEITRLCHKPGKVDYSRYIGGIYSSEWFWAKILHVTRQDSAVAQAAVSWIELCDWVPALLSGTTRPQDIRRGRCSAGHKTLWHESWGGLPPASFFDELDPCINRHLHYPLFSETFTADLPVGTLCAEWAQRLDLPESVVISGGAFDCHMGAVGAGAQSNTLVKVIGTSTCDILIADKQSVGDRAVKGICGQVDGSVVPNFIGLEAGQSAFGDIYAWFSRVLSWPLEQLAAQHPELKTQINASQKQLLPALTDAWAKNPSLDHLPVVLDWFNGRRTPNANQRLKGVITDLNLATDAPALFGGLVASTAFGARAIQECFTEQGIAVNNVMALGGIARKNQVIMQVCCDVLNRPLQIVASDQCCALGAAIFAAVAAKVHADIPAAQQSMASAVERTLRPRPEQAQRFERLYRRYQQWALSAEQHYLPTAAPAPTTPANQAILTH</sequence>
<name>ARAB_SALDC</name>
<keyword id="KW-0054">Arabinose catabolism</keyword>
<keyword id="KW-0067">ATP-binding</keyword>
<keyword id="KW-0119">Carbohydrate metabolism</keyword>
<keyword id="KW-0418">Kinase</keyword>
<keyword id="KW-0547">Nucleotide-binding</keyword>
<keyword id="KW-0808">Transferase</keyword>
<organism>
    <name type="scientific">Salmonella dublin (strain CT_02021853)</name>
    <dbReference type="NCBI Taxonomy" id="439851"/>
    <lineage>
        <taxon>Bacteria</taxon>
        <taxon>Pseudomonadati</taxon>
        <taxon>Pseudomonadota</taxon>
        <taxon>Gammaproteobacteria</taxon>
        <taxon>Enterobacterales</taxon>
        <taxon>Enterobacteriaceae</taxon>
        <taxon>Salmonella</taxon>
    </lineage>
</organism>
<protein>
    <recommendedName>
        <fullName evidence="1">Ribulokinase</fullName>
        <ecNumber evidence="1">2.7.1.16</ecNumber>
    </recommendedName>
</protein>
<evidence type="ECO:0000255" key="1">
    <source>
        <dbReference type="HAMAP-Rule" id="MF_00520"/>
    </source>
</evidence>
<proteinExistence type="inferred from homology"/>
<accession>B5FI46</accession>
<feature type="chain" id="PRO_1000127637" description="Ribulokinase">
    <location>
        <begin position="1"/>
        <end position="569"/>
    </location>
</feature>
<dbReference type="EC" id="2.7.1.16" evidence="1"/>
<dbReference type="EMBL" id="CP001144">
    <property type="protein sequence ID" value="ACH75836.1"/>
    <property type="molecule type" value="Genomic_DNA"/>
</dbReference>
<dbReference type="RefSeq" id="WP_000951811.1">
    <property type="nucleotide sequence ID" value="NC_011205.1"/>
</dbReference>
<dbReference type="SMR" id="B5FI46"/>
<dbReference type="KEGG" id="sed:SeD_A0107"/>
<dbReference type="HOGENOM" id="CLU_009281_9_1_6"/>
<dbReference type="UniPathway" id="UPA00145">
    <property type="reaction ID" value="UER00566"/>
</dbReference>
<dbReference type="Proteomes" id="UP000008322">
    <property type="component" value="Chromosome"/>
</dbReference>
<dbReference type="GO" id="GO:0005737">
    <property type="term" value="C:cytoplasm"/>
    <property type="evidence" value="ECO:0007669"/>
    <property type="project" value="TreeGrafter"/>
</dbReference>
<dbReference type="GO" id="GO:0005524">
    <property type="term" value="F:ATP binding"/>
    <property type="evidence" value="ECO:0007669"/>
    <property type="project" value="UniProtKB-KW"/>
</dbReference>
<dbReference type="GO" id="GO:0019150">
    <property type="term" value="F:D-ribulokinase activity"/>
    <property type="evidence" value="ECO:0007669"/>
    <property type="project" value="TreeGrafter"/>
</dbReference>
<dbReference type="GO" id="GO:0008741">
    <property type="term" value="F:ribulokinase activity"/>
    <property type="evidence" value="ECO:0007669"/>
    <property type="project" value="UniProtKB-UniRule"/>
</dbReference>
<dbReference type="GO" id="GO:0019569">
    <property type="term" value="P:L-arabinose catabolic process to xylulose 5-phosphate"/>
    <property type="evidence" value="ECO:0007669"/>
    <property type="project" value="UniProtKB-UniRule"/>
</dbReference>
<dbReference type="CDD" id="cd07781">
    <property type="entry name" value="ASKHA_NBD_FGGY_L-RBK"/>
    <property type="match status" value="1"/>
</dbReference>
<dbReference type="Gene3D" id="1.20.58.2240">
    <property type="match status" value="1"/>
</dbReference>
<dbReference type="Gene3D" id="3.30.420.40">
    <property type="match status" value="1"/>
</dbReference>
<dbReference type="HAMAP" id="MF_00520">
    <property type="entry name" value="Ribulokinase"/>
    <property type="match status" value="1"/>
</dbReference>
<dbReference type="InterPro" id="IPR043129">
    <property type="entry name" value="ATPase_NBD"/>
</dbReference>
<dbReference type="InterPro" id="IPR018485">
    <property type="entry name" value="FGGY_C"/>
</dbReference>
<dbReference type="InterPro" id="IPR005929">
    <property type="entry name" value="Ribulokinase"/>
</dbReference>
<dbReference type="NCBIfam" id="TIGR01234">
    <property type="entry name" value="L-ribulokinase"/>
    <property type="match status" value="1"/>
</dbReference>
<dbReference type="NCBIfam" id="NF003154">
    <property type="entry name" value="PRK04123.1"/>
    <property type="match status" value="1"/>
</dbReference>
<dbReference type="PANTHER" id="PTHR43435:SF4">
    <property type="entry name" value="FGGY CARBOHYDRATE KINASE DOMAIN-CONTAINING PROTEIN"/>
    <property type="match status" value="1"/>
</dbReference>
<dbReference type="PANTHER" id="PTHR43435">
    <property type="entry name" value="RIBULOKINASE"/>
    <property type="match status" value="1"/>
</dbReference>
<dbReference type="Pfam" id="PF02782">
    <property type="entry name" value="FGGY_C"/>
    <property type="match status" value="1"/>
</dbReference>
<dbReference type="SUPFAM" id="SSF53067">
    <property type="entry name" value="Actin-like ATPase domain"/>
    <property type="match status" value="2"/>
</dbReference>
<reference key="1">
    <citation type="journal article" date="2011" name="J. Bacteriol.">
        <title>Comparative genomics of 28 Salmonella enterica isolates: evidence for CRISPR-mediated adaptive sublineage evolution.</title>
        <authorList>
            <person name="Fricke W.F."/>
            <person name="Mammel M.K."/>
            <person name="McDermott P.F."/>
            <person name="Tartera C."/>
            <person name="White D.G."/>
            <person name="Leclerc J.E."/>
            <person name="Ravel J."/>
            <person name="Cebula T.A."/>
        </authorList>
    </citation>
    <scope>NUCLEOTIDE SEQUENCE [LARGE SCALE GENOMIC DNA]</scope>
    <source>
        <strain>CT_02021853</strain>
    </source>
</reference>